<sequence length="245" mass="28010">MKIVISPAKKMQTDGGFLPKSQPVFLDQAEELWSYLHSLDQAGLEKVWRANAKITEEARQMLAADLTQPQLPALFAYSGLQYQYLAADVLDQAGLDYLDQHLRVLSGLYGSLRPFDGIVPYRLEMKSPLPAFKYKSLYEFWGEKVYQELYQDDSVVLNLASKEYSHLLTPFLKEGDRLLEVVFQEEKNGKWRTQATHAKMARGRLVRWLAEGGRDLSDLQGFTDFGYAFAPDQSGEDRVVFRKKA</sequence>
<protein>
    <recommendedName>
        <fullName evidence="1">UPF0246 protein LBUL_1917</fullName>
    </recommendedName>
</protein>
<comment type="similarity">
    <text evidence="1">Belongs to the UPF0246 family.</text>
</comment>
<name>Y1917_LACDB</name>
<evidence type="ECO:0000255" key="1">
    <source>
        <dbReference type="HAMAP-Rule" id="MF_00652"/>
    </source>
</evidence>
<accession>Q047Q7</accession>
<proteinExistence type="inferred from homology"/>
<reference key="1">
    <citation type="journal article" date="2006" name="Proc. Natl. Acad. Sci. U.S.A.">
        <title>Comparative genomics of the lactic acid bacteria.</title>
        <authorList>
            <person name="Makarova K.S."/>
            <person name="Slesarev A."/>
            <person name="Wolf Y.I."/>
            <person name="Sorokin A."/>
            <person name="Mirkin B."/>
            <person name="Koonin E.V."/>
            <person name="Pavlov A."/>
            <person name="Pavlova N."/>
            <person name="Karamychev V."/>
            <person name="Polouchine N."/>
            <person name="Shakhova V."/>
            <person name="Grigoriev I."/>
            <person name="Lou Y."/>
            <person name="Rohksar D."/>
            <person name="Lucas S."/>
            <person name="Huang K."/>
            <person name="Goodstein D.M."/>
            <person name="Hawkins T."/>
            <person name="Plengvidhya V."/>
            <person name="Welker D."/>
            <person name="Hughes J."/>
            <person name="Goh Y."/>
            <person name="Benson A."/>
            <person name="Baldwin K."/>
            <person name="Lee J.-H."/>
            <person name="Diaz-Muniz I."/>
            <person name="Dosti B."/>
            <person name="Smeianov V."/>
            <person name="Wechter W."/>
            <person name="Barabote R."/>
            <person name="Lorca G."/>
            <person name="Altermann E."/>
            <person name="Barrangou R."/>
            <person name="Ganesan B."/>
            <person name="Xie Y."/>
            <person name="Rawsthorne H."/>
            <person name="Tamir D."/>
            <person name="Parker C."/>
            <person name="Breidt F."/>
            <person name="Broadbent J.R."/>
            <person name="Hutkins R."/>
            <person name="O'Sullivan D."/>
            <person name="Steele J."/>
            <person name="Unlu G."/>
            <person name="Saier M.H. Jr."/>
            <person name="Klaenhammer T."/>
            <person name="Richardson P."/>
            <person name="Kozyavkin S."/>
            <person name="Weimer B.C."/>
            <person name="Mills D.A."/>
        </authorList>
    </citation>
    <scope>NUCLEOTIDE SEQUENCE [LARGE SCALE GENOMIC DNA]</scope>
    <source>
        <strain>ATCC BAA-365 / Lb-18</strain>
    </source>
</reference>
<organism>
    <name type="scientific">Lactobacillus delbrueckii subsp. bulgaricus (strain ATCC BAA-365 / Lb-18)</name>
    <dbReference type="NCBI Taxonomy" id="321956"/>
    <lineage>
        <taxon>Bacteria</taxon>
        <taxon>Bacillati</taxon>
        <taxon>Bacillota</taxon>
        <taxon>Bacilli</taxon>
        <taxon>Lactobacillales</taxon>
        <taxon>Lactobacillaceae</taxon>
        <taxon>Lactobacillus</taxon>
    </lineage>
</organism>
<gene>
    <name type="ordered locus">LBUL_1917</name>
</gene>
<feature type="chain" id="PRO_1000061611" description="UPF0246 protein LBUL_1917">
    <location>
        <begin position="1"/>
        <end position="245"/>
    </location>
</feature>
<dbReference type="EMBL" id="CP000412">
    <property type="protein sequence ID" value="ABJ59315.1"/>
    <property type="molecule type" value="Genomic_DNA"/>
</dbReference>
<dbReference type="RefSeq" id="WP_003620420.1">
    <property type="nucleotide sequence ID" value="NC_008529.1"/>
</dbReference>
<dbReference type="SMR" id="Q047Q7"/>
<dbReference type="KEGG" id="lbu:LBUL_1917"/>
<dbReference type="HOGENOM" id="CLU_061989_1_0_9"/>
<dbReference type="BioCyc" id="LDEL321956:LBUL_RS09080-MONOMER"/>
<dbReference type="GO" id="GO:0005829">
    <property type="term" value="C:cytosol"/>
    <property type="evidence" value="ECO:0007669"/>
    <property type="project" value="TreeGrafter"/>
</dbReference>
<dbReference type="GO" id="GO:0033194">
    <property type="term" value="P:response to hydroperoxide"/>
    <property type="evidence" value="ECO:0007669"/>
    <property type="project" value="TreeGrafter"/>
</dbReference>
<dbReference type="HAMAP" id="MF_00652">
    <property type="entry name" value="UPF0246"/>
    <property type="match status" value="1"/>
</dbReference>
<dbReference type="InterPro" id="IPR005583">
    <property type="entry name" value="YaaA"/>
</dbReference>
<dbReference type="NCBIfam" id="NF002543">
    <property type="entry name" value="PRK02101.1-4"/>
    <property type="match status" value="1"/>
</dbReference>
<dbReference type="PANTHER" id="PTHR30283:SF4">
    <property type="entry name" value="PEROXIDE STRESS RESISTANCE PROTEIN YAAA"/>
    <property type="match status" value="1"/>
</dbReference>
<dbReference type="PANTHER" id="PTHR30283">
    <property type="entry name" value="PEROXIDE STRESS RESPONSE PROTEIN YAAA"/>
    <property type="match status" value="1"/>
</dbReference>
<dbReference type="Pfam" id="PF03883">
    <property type="entry name" value="H2O2_YaaD"/>
    <property type="match status" value="1"/>
</dbReference>